<organism>
    <name type="scientific">Rhodococcus erythropolis (strain PR4 / NBRC 100887)</name>
    <dbReference type="NCBI Taxonomy" id="234621"/>
    <lineage>
        <taxon>Bacteria</taxon>
        <taxon>Bacillati</taxon>
        <taxon>Actinomycetota</taxon>
        <taxon>Actinomycetes</taxon>
        <taxon>Mycobacteriales</taxon>
        <taxon>Nocardiaceae</taxon>
        <taxon>Rhodococcus</taxon>
        <taxon>Rhodococcus erythropolis group</taxon>
    </lineage>
</organism>
<protein>
    <recommendedName>
        <fullName evidence="1">DNA replication and repair protein RecF</fullName>
    </recommendedName>
</protein>
<keyword id="KW-0067">ATP-binding</keyword>
<keyword id="KW-0963">Cytoplasm</keyword>
<keyword id="KW-0227">DNA damage</keyword>
<keyword id="KW-0234">DNA repair</keyword>
<keyword id="KW-0235">DNA replication</keyword>
<keyword id="KW-0238">DNA-binding</keyword>
<keyword id="KW-0547">Nucleotide-binding</keyword>
<keyword id="KW-0742">SOS response</keyword>
<dbReference type="EMBL" id="AP008957">
    <property type="protein sequence ID" value="BAH30712.1"/>
    <property type="molecule type" value="Genomic_DNA"/>
</dbReference>
<dbReference type="RefSeq" id="WP_020905610.1">
    <property type="nucleotide sequence ID" value="NC_012490.1"/>
</dbReference>
<dbReference type="SMR" id="C0ZLE4"/>
<dbReference type="GeneID" id="57484110"/>
<dbReference type="KEGG" id="rer:RER_00040"/>
<dbReference type="eggNOG" id="COG1195">
    <property type="taxonomic scope" value="Bacteria"/>
</dbReference>
<dbReference type="HOGENOM" id="CLU_040267_1_1_11"/>
<dbReference type="Proteomes" id="UP000002204">
    <property type="component" value="Chromosome"/>
</dbReference>
<dbReference type="GO" id="GO:0005737">
    <property type="term" value="C:cytoplasm"/>
    <property type="evidence" value="ECO:0007669"/>
    <property type="project" value="UniProtKB-SubCell"/>
</dbReference>
<dbReference type="GO" id="GO:0005524">
    <property type="term" value="F:ATP binding"/>
    <property type="evidence" value="ECO:0007669"/>
    <property type="project" value="UniProtKB-UniRule"/>
</dbReference>
<dbReference type="GO" id="GO:0003697">
    <property type="term" value="F:single-stranded DNA binding"/>
    <property type="evidence" value="ECO:0007669"/>
    <property type="project" value="UniProtKB-UniRule"/>
</dbReference>
<dbReference type="GO" id="GO:0006260">
    <property type="term" value="P:DNA replication"/>
    <property type="evidence" value="ECO:0007669"/>
    <property type="project" value="UniProtKB-UniRule"/>
</dbReference>
<dbReference type="GO" id="GO:0000731">
    <property type="term" value="P:DNA synthesis involved in DNA repair"/>
    <property type="evidence" value="ECO:0007669"/>
    <property type="project" value="TreeGrafter"/>
</dbReference>
<dbReference type="GO" id="GO:0006302">
    <property type="term" value="P:double-strand break repair"/>
    <property type="evidence" value="ECO:0007669"/>
    <property type="project" value="TreeGrafter"/>
</dbReference>
<dbReference type="GO" id="GO:0009432">
    <property type="term" value="P:SOS response"/>
    <property type="evidence" value="ECO:0007669"/>
    <property type="project" value="UniProtKB-UniRule"/>
</dbReference>
<dbReference type="Gene3D" id="3.40.50.300">
    <property type="entry name" value="P-loop containing nucleotide triphosphate hydrolases"/>
    <property type="match status" value="1"/>
</dbReference>
<dbReference type="Gene3D" id="1.20.1050.90">
    <property type="entry name" value="RecF/RecN/SMC, N-terminal domain"/>
    <property type="match status" value="1"/>
</dbReference>
<dbReference type="HAMAP" id="MF_00365">
    <property type="entry name" value="RecF"/>
    <property type="match status" value="1"/>
</dbReference>
<dbReference type="InterPro" id="IPR001238">
    <property type="entry name" value="DNA-binding_RecF"/>
</dbReference>
<dbReference type="InterPro" id="IPR018078">
    <property type="entry name" value="DNA-binding_RecF_CS"/>
</dbReference>
<dbReference type="InterPro" id="IPR027417">
    <property type="entry name" value="P-loop_NTPase"/>
</dbReference>
<dbReference type="InterPro" id="IPR003395">
    <property type="entry name" value="RecF/RecN/SMC_N"/>
</dbReference>
<dbReference type="InterPro" id="IPR042174">
    <property type="entry name" value="RecF_2"/>
</dbReference>
<dbReference type="NCBIfam" id="TIGR00611">
    <property type="entry name" value="recf"/>
    <property type="match status" value="1"/>
</dbReference>
<dbReference type="PANTHER" id="PTHR32182">
    <property type="entry name" value="DNA REPLICATION AND REPAIR PROTEIN RECF"/>
    <property type="match status" value="1"/>
</dbReference>
<dbReference type="PANTHER" id="PTHR32182:SF0">
    <property type="entry name" value="DNA REPLICATION AND REPAIR PROTEIN RECF"/>
    <property type="match status" value="1"/>
</dbReference>
<dbReference type="Pfam" id="PF02463">
    <property type="entry name" value="SMC_N"/>
    <property type="match status" value="1"/>
</dbReference>
<dbReference type="SUPFAM" id="SSF52540">
    <property type="entry name" value="P-loop containing nucleoside triphosphate hydrolases"/>
    <property type="match status" value="1"/>
</dbReference>
<dbReference type="PROSITE" id="PS00617">
    <property type="entry name" value="RECF_1"/>
    <property type="match status" value="1"/>
</dbReference>
<dbReference type="PROSITE" id="PS00618">
    <property type="entry name" value="RECF_2"/>
    <property type="match status" value="1"/>
</dbReference>
<proteinExistence type="inferred from homology"/>
<gene>
    <name evidence="1" type="primary">recF</name>
    <name type="ordered locus">RER_00040</name>
</gene>
<comment type="function">
    <text evidence="1">The RecF protein is involved in DNA metabolism; it is required for DNA replication and normal SOS inducibility. RecF binds preferentially to single-stranded, linear DNA. It also seems to bind ATP.</text>
</comment>
<comment type="subcellular location">
    <subcellularLocation>
        <location evidence="1">Cytoplasm</location>
    </subcellularLocation>
</comment>
<comment type="similarity">
    <text evidence="1">Belongs to the RecF family.</text>
</comment>
<name>RECF_RHOE4</name>
<evidence type="ECO:0000255" key="1">
    <source>
        <dbReference type="HAMAP-Rule" id="MF_00365"/>
    </source>
</evidence>
<sequence length="409" mass="44614">MFVRRFSLRDFRSWDSLTLDLTPGTTVFLGSNGHGKTNVLESLGYLSTLSSHRVSTDAPMIRSGSASAFAGATVVNNGRELTIDVELIEGKSNRARINQSPTRRPREVLGILQSVMFAPEDLSLVRGDPGDRRRYLDELLTSRIPRMAAVRADYDKVLRQRSALLKTAGAALRRGSRGGESDNVLSTLEVWDGHLAAHGAQLLAGRLELVHDLAPHLAESYRSIAPESRPASIRYKSSLGSSLDPEFTDPARISGIDDVAYLEERFHLELAQMRSKEIDRGVCLVGPHRDDLELVLGDSPAKGFASHGESWSFALSLRLAGFALLRADGSDPVLMLDDVFAELDRRRRRALATVAATAEQVLITAAVPEDVPDELEAAKFGVEASDTGDGRISRIVPVGSTDQEVEFDD</sequence>
<reference key="1">
    <citation type="submission" date="2005-03" db="EMBL/GenBank/DDBJ databases">
        <title>Comparison of the complete genome sequences of Rhodococcus erythropolis PR4 and Rhodococcus opacus B4.</title>
        <authorList>
            <person name="Takarada H."/>
            <person name="Sekine M."/>
            <person name="Hosoyama A."/>
            <person name="Yamada R."/>
            <person name="Fujisawa T."/>
            <person name="Omata S."/>
            <person name="Shimizu A."/>
            <person name="Tsukatani N."/>
            <person name="Tanikawa S."/>
            <person name="Fujita N."/>
            <person name="Harayama S."/>
        </authorList>
    </citation>
    <scope>NUCLEOTIDE SEQUENCE [LARGE SCALE GENOMIC DNA]</scope>
    <source>
        <strain>PR4 / NBRC 100887</strain>
    </source>
</reference>
<feature type="chain" id="PRO_1000205502" description="DNA replication and repair protein RecF">
    <location>
        <begin position="1"/>
        <end position="409"/>
    </location>
</feature>
<feature type="binding site" evidence="1">
    <location>
        <begin position="30"/>
        <end position="37"/>
    </location>
    <ligand>
        <name>ATP</name>
        <dbReference type="ChEBI" id="CHEBI:30616"/>
    </ligand>
</feature>
<accession>C0ZLE4</accession>